<sequence length="97" mass="11289">MNGEVESRLRKYLERDKNGLRRELLRVLLEGKKFTTSEIHDILSRRGYSISPRGVSAMVGLISARLGILKTELGEKNRYYLKSEYADLVRKIVEEFE</sequence>
<organism>
    <name type="scientific">Archaeoglobus fulgidus (strain ATCC 49558 / DSM 4304 / JCM 9628 / NBRC 100126 / VC-16)</name>
    <dbReference type="NCBI Taxonomy" id="224325"/>
    <lineage>
        <taxon>Archaea</taxon>
        <taxon>Methanobacteriati</taxon>
        <taxon>Methanobacteriota</taxon>
        <taxon>Archaeoglobi</taxon>
        <taxon>Archaeoglobales</taxon>
        <taxon>Archaeoglobaceae</taxon>
        <taxon>Archaeoglobus</taxon>
    </lineage>
</organism>
<protein>
    <recommendedName>
        <fullName>Uncharacterized protein AF_1218</fullName>
    </recommendedName>
</protein>
<reference key="1">
    <citation type="journal article" date="1997" name="Nature">
        <title>The complete genome sequence of the hyperthermophilic, sulphate-reducing archaeon Archaeoglobus fulgidus.</title>
        <authorList>
            <person name="Klenk H.-P."/>
            <person name="Clayton R.A."/>
            <person name="Tomb J.-F."/>
            <person name="White O."/>
            <person name="Nelson K.E."/>
            <person name="Ketchum K.A."/>
            <person name="Dodson R.J."/>
            <person name="Gwinn M.L."/>
            <person name="Hickey E.K."/>
            <person name="Peterson J.D."/>
            <person name="Richardson D.L."/>
            <person name="Kerlavage A.R."/>
            <person name="Graham D.E."/>
            <person name="Kyrpides N.C."/>
            <person name="Fleischmann R.D."/>
            <person name="Quackenbush J."/>
            <person name="Lee N.H."/>
            <person name="Sutton G.G."/>
            <person name="Gill S.R."/>
            <person name="Kirkness E.F."/>
            <person name="Dougherty B.A."/>
            <person name="McKenney K."/>
            <person name="Adams M.D."/>
            <person name="Loftus B.J."/>
            <person name="Peterson S.N."/>
            <person name="Reich C.I."/>
            <person name="McNeil L.K."/>
            <person name="Badger J.H."/>
            <person name="Glodek A."/>
            <person name="Zhou L."/>
            <person name="Overbeek R."/>
            <person name="Gocayne J.D."/>
            <person name="Weidman J.F."/>
            <person name="McDonald L.A."/>
            <person name="Utterback T.R."/>
            <person name="Cotton M.D."/>
            <person name="Spriggs T."/>
            <person name="Artiach P."/>
            <person name="Kaine B.P."/>
            <person name="Sykes S.M."/>
            <person name="Sadow P.W."/>
            <person name="D'Andrea K.P."/>
            <person name="Bowman C."/>
            <person name="Fujii C."/>
            <person name="Garland S.A."/>
            <person name="Mason T.M."/>
            <person name="Olsen G.J."/>
            <person name="Fraser C.M."/>
            <person name="Smith H.O."/>
            <person name="Woese C.R."/>
            <person name="Venter J.C."/>
        </authorList>
    </citation>
    <scope>NUCLEOTIDE SEQUENCE [LARGE SCALE GENOMIC DNA]</scope>
    <source>
        <strain>ATCC 49558 / DSM 4304 / JCM 9628 / NBRC 100126 / VC-16</strain>
    </source>
</reference>
<proteinExistence type="predicted"/>
<feature type="chain" id="PRO_0000127972" description="Uncharacterized protein AF_1218">
    <location>
        <begin position="1"/>
        <end position="97"/>
    </location>
</feature>
<dbReference type="EMBL" id="AE000782">
    <property type="protein sequence ID" value="AAB90035.1"/>
    <property type="molecule type" value="Genomic_DNA"/>
</dbReference>
<dbReference type="PIR" id="A69402">
    <property type="entry name" value="A69402"/>
</dbReference>
<dbReference type="RefSeq" id="WP_010878713.1">
    <property type="nucleotide sequence ID" value="NC_000917.1"/>
</dbReference>
<dbReference type="SMR" id="O29050"/>
<dbReference type="STRING" id="224325.AF_1218"/>
<dbReference type="PaxDb" id="224325-AF_1218"/>
<dbReference type="DNASU" id="1484442"/>
<dbReference type="EnsemblBacteria" id="AAB90035">
    <property type="protein sequence ID" value="AAB90035"/>
    <property type="gene ID" value="AF_1218"/>
</dbReference>
<dbReference type="KEGG" id="afu:AF_1218"/>
<dbReference type="eggNOG" id="arCOG04419">
    <property type="taxonomic scope" value="Archaea"/>
</dbReference>
<dbReference type="HOGENOM" id="CLU_161115_1_0_2"/>
<dbReference type="OrthoDB" id="130005at2157"/>
<dbReference type="PhylomeDB" id="O29050"/>
<dbReference type="Proteomes" id="UP000002199">
    <property type="component" value="Chromosome"/>
</dbReference>
<dbReference type="InterPro" id="IPR020501">
    <property type="entry name" value="Uncharacterised_AF1218"/>
</dbReference>
<dbReference type="Pfam" id="PF10826">
    <property type="entry name" value="DUF2551"/>
    <property type="match status" value="1"/>
</dbReference>
<accession>O29050</accession>
<keyword id="KW-1185">Reference proteome</keyword>
<gene>
    <name type="ordered locus">AF_1218</name>
</gene>
<name>Y1218_ARCFU</name>